<proteinExistence type="inferred from homology"/>
<sequence>MRHTLPLAPQFYVTAPQPCPYIDGRMERKLFTALQGEFAETLNDSLSKQGFRRSQNVLYRPSCADCTACLSARIDVSAFTPSRSQRRTLKRNAVMEREATSPWATEDQYSLFRKYLDARHAEGGMADMDIFEFAAMIEETPVRSRVVEYRQSAEAAPNRKRAPRNLAGVCLTDVLDDGLSMVYSFYDPDLVRQSLGTFMVLDHVEIAREAGLPYVYLGYWVPGSPKMGYKASFSGLEIYKNGEWQPIGDPESHSRDTHPLNVDPIAEQVAKINLPDTLPTDRRKG</sequence>
<keyword id="KW-0012">Acyltransferase</keyword>
<keyword id="KW-0963">Cytoplasm</keyword>
<keyword id="KW-1185">Reference proteome</keyword>
<keyword id="KW-0808">Transferase</keyword>
<dbReference type="EC" id="2.3.2.29" evidence="1"/>
<dbReference type="EMBL" id="CP000830">
    <property type="protein sequence ID" value="ABV92824.1"/>
    <property type="molecule type" value="Genomic_DNA"/>
</dbReference>
<dbReference type="RefSeq" id="WP_012177755.1">
    <property type="nucleotide sequence ID" value="NC_009952.1"/>
</dbReference>
<dbReference type="SMR" id="A8LSL0"/>
<dbReference type="STRING" id="398580.Dshi_1082"/>
<dbReference type="KEGG" id="dsh:Dshi_1082"/>
<dbReference type="eggNOG" id="COG2935">
    <property type="taxonomic scope" value="Bacteria"/>
</dbReference>
<dbReference type="HOGENOM" id="CLU_077607_1_0_5"/>
<dbReference type="OrthoDB" id="9782022at2"/>
<dbReference type="Proteomes" id="UP000006833">
    <property type="component" value="Chromosome"/>
</dbReference>
<dbReference type="GO" id="GO:0005737">
    <property type="term" value="C:cytoplasm"/>
    <property type="evidence" value="ECO:0007669"/>
    <property type="project" value="UniProtKB-SubCell"/>
</dbReference>
<dbReference type="GO" id="GO:0004057">
    <property type="term" value="F:arginyl-tRNA--protein transferase activity"/>
    <property type="evidence" value="ECO:0007669"/>
    <property type="project" value="InterPro"/>
</dbReference>
<dbReference type="GO" id="GO:0008914">
    <property type="term" value="F:leucyl-tRNA--protein transferase activity"/>
    <property type="evidence" value="ECO:0007669"/>
    <property type="project" value="UniProtKB-UniRule"/>
</dbReference>
<dbReference type="GO" id="GO:0071596">
    <property type="term" value="P:ubiquitin-dependent protein catabolic process via the N-end rule pathway"/>
    <property type="evidence" value="ECO:0007669"/>
    <property type="project" value="InterPro"/>
</dbReference>
<dbReference type="HAMAP" id="MF_00689">
    <property type="entry name" value="Bpt"/>
    <property type="match status" value="1"/>
</dbReference>
<dbReference type="InterPro" id="IPR016181">
    <property type="entry name" value="Acyl_CoA_acyltransferase"/>
</dbReference>
<dbReference type="InterPro" id="IPR017138">
    <property type="entry name" value="Asp_Glu_LeuTrfase"/>
</dbReference>
<dbReference type="InterPro" id="IPR030700">
    <property type="entry name" value="N-end_Aminoacyl_Trfase"/>
</dbReference>
<dbReference type="InterPro" id="IPR007472">
    <property type="entry name" value="N-end_Aminoacyl_Trfase_C"/>
</dbReference>
<dbReference type="InterPro" id="IPR007471">
    <property type="entry name" value="N-end_Aminoacyl_Trfase_N"/>
</dbReference>
<dbReference type="NCBIfam" id="NF002341">
    <property type="entry name" value="PRK01305.1-1"/>
    <property type="match status" value="1"/>
</dbReference>
<dbReference type="NCBIfam" id="NF002342">
    <property type="entry name" value="PRK01305.1-3"/>
    <property type="match status" value="1"/>
</dbReference>
<dbReference type="NCBIfam" id="NF002343">
    <property type="entry name" value="PRK01305.1-4"/>
    <property type="match status" value="1"/>
</dbReference>
<dbReference type="NCBIfam" id="NF002346">
    <property type="entry name" value="PRK01305.2-3"/>
    <property type="match status" value="1"/>
</dbReference>
<dbReference type="PANTHER" id="PTHR21367">
    <property type="entry name" value="ARGININE-TRNA-PROTEIN TRANSFERASE 1"/>
    <property type="match status" value="1"/>
</dbReference>
<dbReference type="PANTHER" id="PTHR21367:SF1">
    <property type="entry name" value="ARGINYL-TRNA--PROTEIN TRANSFERASE 1"/>
    <property type="match status" value="1"/>
</dbReference>
<dbReference type="Pfam" id="PF04377">
    <property type="entry name" value="ATE_C"/>
    <property type="match status" value="1"/>
</dbReference>
<dbReference type="Pfam" id="PF04376">
    <property type="entry name" value="ATE_N"/>
    <property type="match status" value="1"/>
</dbReference>
<dbReference type="PIRSF" id="PIRSF037208">
    <property type="entry name" value="ATE_pro_prd"/>
    <property type="match status" value="1"/>
</dbReference>
<dbReference type="SUPFAM" id="SSF55729">
    <property type="entry name" value="Acyl-CoA N-acyltransferases (Nat)"/>
    <property type="match status" value="1"/>
</dbReference>
<protein>
    <recommendedName>
        <fullName evidence="1">Aspartate/glutamate leucyltransferase</fullName>
        <ecNumber evidence="1">2.3.2.29</ecNumber>
    </recommendedName>
</protein>
<name>BPT_DINSH</name>
<gene>
    <name evidence="1" type="primary">bpt</name>
    <name type="ordered locus">Dshi_1082</name>
</gene>
<comment type="function">
    <text evidence="1">Functions in the N-end rule pathway of protein degradation where it conjugates Leu from its aminoacyl-tRNA to the N-termini of proteins containing an N-terminal aspartate or glutamate.</text>
</comment>
<comment type="catalytic activity">
    <reaction evidence="1">
        <text>N-terminal L-glutamyl-[protein] + L-leucyl-tRNA(Leu) = N-terminal L-leucyl-L-glutamyl-[protein] + tRNA(Leu) + H(+)</text>
        <dbReference type="Rhea" id="RHEA:50412"/>
        <dbReference type="Rhea" id="RHEA-COMP:9613"/>
        <dbReference type="Rhea" id="RHEA-COMP:9622"/>
        <dbReference type="Rhea" id="RHEA-COMP:12664"/>
        <dbReference type="Rhea" id="RHEA-COMP:12668"/>
        <dbReference type="ChEBI" id="CHEBI:15378"/>
        <dbReference type="ChEBI" id="CHEBI:64721"/>
        <dbReference type="ChEBI" id="CHEBI:78442"/>
        <dbReference type="ChEBI" id="CHEBI:78494"/>
        <dbReference type="ChEBI" id="CHEBI:133041"/>
        <dbReference type="EC" id="2.3.2.29"/>
    </reaction>
</comment>
<comment type="catalytic activity">
    <reaction evidence="1">
        <text>N-terminal L-aspartyl-[protein] + L-leucyl-tRNA(Leu) = N-terminal L-leucyl-L-aspartyl-[protein] + tRNA(Leu) + H(+)</text>
        <dbReference type="Rhea" id="RHEA:50420"/>
        <dbReference type="Rhea" id="RHEA-COMP:9613"/>
        <dbReference type="Rhea" id="RHEA-COMP:9622"/>
        <dbReference type="Rhea" id="RHEA-COMP:12669"/>
        <dbReference type="Rhea" id="RHEA-COMP:12674"/>
        <dbReference type="ChEBI" id="CHEBI:15378"/>
        <dbReference type="ChEBI" id="CHEBI:64720"/>
        <dbReference type="ChEBI" id="CHEBI:78442"/>
        <dbReference type="ChEBI" id="CHEBI:78494"/>
        <dbReference type="ChEBI" id="CHEBI:133042"/>
        <dbReference type="EC" id="2.3.2.29"/>
    </reaction>
</comment>
<comment type="subcellular location">
    <subcellularLocation>
        <location evidence="1">Cytoplasm</location>
    </subcellularLocation>
</comment>
<comment type="similarity">
    <text evidence="1">Belongs to the R-transferase family. Bpt subfamily.</text>
</comment>
<organism>
    <name type="scientific">Dinoroseobacter shibae (strain DSM 16493 / NCIMB 14021 / DFL 12)</name>
    <dbReference type="NCBI Taxonomy" id="398580"/>
    <lineage>
        <taxon>Bacteria</taxon>
        <taxon>Pseudomonadati</taxon>
        <taxon>Pseudomonadota</taxon>
        <taxon>Alphaproteobacteria</taxon>
        <taxon>Rhodobacterales</taxon>
        <taxon>Roseobacteraceae</taxon>
        <taxon>Dinoroseobacter</taxon>
    </lineage>
</organism>
<feature type="chain" id="PRO_1000083108" description="Aspartate/glutamate leucyltransferase">
    <location>
        <begin position="1"/>
        <end position="285"/>
    </location>
</feature>
<evidence type="ECO:0000255" key="1">
    <source>
        <dbReference type="HAMAP-Rule" id="MF_00689"/>
    </source>
</evidence>
<accession>A8LSL0</accession>
<reference key="1">
    <citation type="journal article" date="2010" name="ISME J.">
        <title>The complete genome sequence of the algal symbiont Dinoroseobacter shibae: a hitchhiker's guide to life in the sea.</title>
        <authorList>
            <person name="Wagner-Dobler I."/>
            <person name="Ballhausen B."/>
            <person name="Berger M."/>
            <person name="Brinkhoff T."/>
            <person name="Buchholz I."/>
            <person name="Bunk B."/>
            <person name="Cypionka H."/>
            <person name="Daniel R."/>
            <person name="Drepper T."/>
            <person name="Gerdts G."/>
            <person name="Hahnke S."/>
            <person name="Han C."/>
            <person name="Jahn D."/>
            <person name="Kalhoefer D."/>
            <person name="Kiss H."/>
            <person name="Klenk H.P."/>
            <person name="Kyrpides N."/>
            <person name="Liebl W."/>
            <person name="Liesegang H."/>
            <person name="Meincke L."/>
            <person name="Pati A."/>
            <person name="Petersen J."/>
            <person name="Piekarski T."/>
            <person name="Pommerenke C."/>
            <person name="Pradella S."/>
            <person name="Pukall R."/>
            <person name="Rabus R."/>
            <person name="Stackebrandt E."/>
            <person name="Thole S."/>
            <person name="Thompson L."/>
            <person name="Tielen P."/>
            <person name="Tomasch J."/>
            <person name="von Jan M."/>
            <person name="Wanphrut N."/>
            <person name="Wichels A."/>
            <person name="Zech H."/>
            <person name="Simon M."/>
        </authorList>
    </citation>
    <scope>NUCLEOTIDE SEQUENCE [LARGE SCALE GENOMIC DNA]</scope>
    <source>
        <strain>DSM 16493 / NCIMB 14021 / DFL 12</strain>
    </source>
</reference>